<proteinExistence type="inferred from homology"/>
<protein>
    <recommendedName>
        <fullName evidence="1">DNA ligase</fullName>
        <ecNumber evidence="1">6.5.1.2</ecNumber>
    </recommendedName>
    <alternativeName>
        <fullName evidence="1">Polydeoxyribonucleotide synthase [NAD(+)]</fullName>
    </alternativeName>
</protein>
<organism>
    <name type="scientific">Streptococcus pneumoniae (strain ATCC 700669 / Spain 23F-1)</name>
    <dbReference type="NCBI Taxonomy" id="561276"/>
    <lineage>
        <taxon>Bacteria</taxon>
        <taxon>Bacillati</taxon>
        <taxon>Bacillota</taxon>
        <taxon>Bacilli</taxon>
        <taxon>Lactobacillales</taxon>
        <taxon>Streptococcaceae</taxon>
        <taxon>Streptococcus</taxon>
    </lineage>
</organism>
<accession>B8ZPV9</accession>
<dbReference type="EC" id="6.5.1.2" evidence="1"/>
<dbReference type="EMBL" id="FM211187">
    <property type="protein sequence ID" value="CAR68857.1"/>
    <property type="molecule type" value="Genomic_DNA"/>
</dbReference>
<dbReference type="RefSeq" id="WP_001042568.1">
    <property type="nucleotide sequence ID" value="NC_011900.1"/>
</dbReference>
<dbReference type="SMR" id="B8ZPV9"/>
<dbReference type="KEGG" id="sne:SPN23F10380"/>
<dbReference type="HOGENOM" id="CLU_007764_2_1_9"/>
<dbReference type="GO" id="GO:0005829">
    <property type="term" value="C:cytosol"/>
    <property type="evidence" value="ECO:0007669"/>
    <property type="project" value="TreeGrafter"/>
</dbReference>
<dbReference type="GO" id="GO:0003677">
    <property type="term" value="F:DNA binding"/>
    <property type="evidence" value="ECO:0007669"/>
    <property type="project" value="InterPro"/>
</dbReference>
<dbReference type="GO" id="GO:0003911">
    <property type="term" value="F:DNA ligase (NAD+) activity"/>
    <property type="evidence" value="ECO:0007669"/>
    <property type="project" value="UniProtKB-UniRule"/>
</dbReference>
<dbReference type="GO" id="GO:0046872">
    <property type="term" value="F:metal ion binding"/>
    <property type="evidence" value="ECO:0007669"/>
    <property type="project" value="UniProtKB-KW"/>
</dbReference>
<dbReference type="GO" id="GO:0006281">
    <property type="term" value="P:DNA repair"/>
    <property type="evidence" value="ECO:0007669"/>
    <property type="project" value="UniProtKB-KW"/>
</dbReference>
<dbReference type="GO" id="GO:0006260">
    <property type="term" value="P:DNA replication"/>
    <property type="evidence" value="ECO:0007669"/>
    <property type="project" value="UniProtKB-KW"/>
</dbReference>
<dbReference type="CDD" id="cd17748">
    <property type="entry name" value="BRCT_DNA_ligase_like"/>
    <property type="match status" value="1"/>
</dbReference>
<dbReference type="CDD" id="cd00114">
    <property type="entry name" value="LIGANc"/>
    <property type="match status" value="1"/>
</dbReference>
<dbReference type="FunFam" id="1.10.150.20:FF:000006">
    <property type="entry name" value="DNA ligase"/>
    <property type="match status" value="1"/>
</dbReference>
<dbReference type="FunFam" id="1.10.150.20:FF:000007">
    <property type="entry name" value="DNA ligase"/>
    <property type="match status" value="1"/>
</dbReference>
<dbReference type="FunFam" id="1.10.287.610:FF:000002">
    <property type="entry name" value="DNA ligase"/>
    <property type="match status" value="1"/>
</dbReference>
<dbReference type="FunFam" id="2.40.50.140:FF:000012">
    <property type="entry name" value="DNA ligase"/>
    <property type="match status" value="1"/>
</dbReference>
<dbReference type="FunFam" id="3.30.470.30:FF:000001">
    <property type="entry name" value="DNA ligase"/>
    <property type="match status" value="1"/>
</dbReference>
<dbReference type="Gene3D" id="6.20.10.30">
    <property type="match status" value="1"/>
</dbReference>
<dbReference type="Gene3D" id="1.10.150.20">
    <property type="entry name" value="5' to 3' exonuclease, C-terminal subdomain"/>
    <property type="match status" value="2"/>
</dbReference>
<dbReference type="Gene3D" id="3.40.50.10190">
    <property type="entry name" value="BRCT domain"/>
    <property type="match status" value="1"/>
</dbReference>
<dbReference type="Gene3D" id="3.30.470.30">
    <property type="entry name" value="DNA ligase/mRNA capping enzyme"/>
    <property type="match status" value="1"/>
</dbReference>
<dbReference type="Gene3D" id="1.10.287.610">
    <property type="entry name" value="Helix hairpin bin"/>
    <property type="match status" value="1"/>
</dbReference>
<dbReference type="Gene3D" id="2.40.50.140">
    <property type="entry name" value="Nucleic acid-binding proteins"/>
    <property type="match status" value="1"/>
</dbReference>
<dbReference type="HAMAP" id="MF_01588">
    <property type="entry name" value="DNA_ligase_A"/>
    <property type="match status" value="1"/>
</dbReference>
<dbReference type="InterPro" id="IPR001357">
    <property type="entry name" value="BRCT_dom"/>
</dbReference>
<dbReference type="InterPro" id="IPR036420">
    <property type="entry name" value="BRCT_dom_sf"/>
</dbReference>
<dbReference type="InterPro" id="IPR041663">
    <property type="entry name" value="DisA/LigA_HHH"/>
</dbReference>
<dbReference type="InterPro" id="IPR001679">
    <property type="entry name" value="DNA_ligase"/>
</dbReference>
<dbReference type="InterPro" id="IPR018239">
    <property type="entry name" value="DNA_ligase_AS"/>
</dbReference>
<dbReference type="InterPro" id="IPR033136">
    <property type="entry name" value="DNA_ligase_CS"/>
</dbReference>
<dbReference type="InterPro" id="IPR013839">
    <property type="entry name" value="DNAligase_adenylation"/>
</dbReference>
<dbReference type="InterPro" id="IPR013840">
    <property type="entry name" value="DNAligase_N"/>
</dbReference>
<dbReference type="InterPro" id="IPR003583">
    <property type="entry name" value="Hlx-hairpin-Hlx_DNA-bd_motif"/>
</dbReference>
<dbReference type="InterPro" id="IPR012340">
    <property type="entry name" value="NA-bd_OB-fold"/>
</dbReference>
<dbReference type="InterPro" id="IPR004150">
    <property type="entry name" value="NAD_DNA_ligase_OB"/>
</dbReference>
<dbReference type="InterPro" id="IPR010994">
    <property type="entry name" value="RuvA_2-like"/>
</dbReference>
<dbReference type="InterPro" id="IPR004149">
    <property type="entry name" value="Znf_DNAligase_C4"/>
</dbReference>
<dbReference type="NCBIfam" id="TIGR00575">
    <property type="entry name" value="dnlj"/>
    <property type="match status" value="1"/>
</dbReference>
<dbReference type="NCBIfam" id="NF005932">
    <property type="entry name" value="PRK07956.1"/>
    <property type="match status" value="1"/>
</dbReference>
<dbReference type="PANTHER" id="PTHR23389">
    <property type="entry name" value="CHROMOSOME TRANSMISSION FIDELITY FACTOR 18"/>
    <property type="match status" value="1"/>
</dbReference>
<dbReference type="PANTHER" id="PTHR23389:SF9">
    <property type="entry name" value="DNA LIGASE"/>
    <property type="match status" value="1"/>
</dbReference>
<dbReference type="Pfam" id="PF00533">
    <property type="entry name" value="BRCT"/>
    <property type="match status" value="1"/>
</dbReference>
<dbReference type="Pfam" id="PF01653">
    <property type="entry name" value="DNA_ligase_aden"/>
    <property type="match status" value="1"/>
</dbReference>
<dbReference type="Pfam" id="PF03120">
    <property type="entry name" value="DNA_ligase_OB"/>
    <property type="match status" value="1"/>
</dbReference>
<dbReference type="Pfam" id="PF03119">
    <property type="entry name" value="DNA_ligase_ZBD"/>
    <property type="match status" value="1"/>
</dbReference>
<dbReference type="Pfam" id="PF12826">
    <property type="entry name" value="HHH_2"/>
    <property type="match status" value="1"/>
</dbReference>
<dbReference type="Pfam" id="PF14520">
    <property type="entry name" value="HHH_5"/>
    <property type="match status" value="1"/>
</dbReference>
<dbReference type="PIRSF" id="PIRSF001604">
    <property type="entry name" value="LigA"/>
    <property type="match status" value="1"/>
</dbReference>
<dbReference type="SMART" id="SM00292">
    <property type="entry name" value="BRCT"/>
    <property type="match status" value="1"/>
</dbReference>
<dbReference type="SMART" id="SM00278">
    <property type="entry name" value="HhH1"/>
    <property type="match status" value="2"/>
</dbReference>
<dbReference type="SMART" id="SM00532">
    <property type="entry name" value="LIGANc"/>
    <property type="match status" value="1"/>
</dbReference>
<dbReference type="SUPFAM" id="SSF52113">
    <property type="entry name" value="BRCT domain"/>
    <property type="match status" value="1"/>
</dbReference>
<dbReference type="SUPFAM" id="SSF56091">
    <property type="entry name" value="DNA ligase/mRNA capping enzyme, catalytic domain"/>
    <property type="match status" value="1"/>
</dbReference>
<dbReference type="SUPFAM" id="SSF50249">
    <property type="entry name" value="Nucleic acid-binding proteins"/>
    <property type="match status" value="1"/>
</dbReference>
<dbReference type="SUPFAM" id="SSF47781">
    <property type="entry name" value="RuvA domain 2-like"/>
    <property type="match status" value="1"/>
</dbReference>
<dbReference type="PROSITE" id="PS50172">
    <property type="entry name" value="BRCT"/>
    <property type="match status" value="1"/>
</dbReference>
<dbReference type="PROSITE" id="PS01055">
    <property type="entry name" value="DNA_LIGASE_N1"/>
    <property type="match status" value="1"/>
</dbReference>
<dbReference type="PROSITE" id="PS01056">
    <property type="entry name" value="DNA_LIGASE_N2"/>
    <property type="match status" value="1"/>
</dbReference>
<sequence>MNKRMNELVALLNRYATEYYTSDNPSVADSEYDRLYRELVELETAYPEQVLADSPTHRVGGKVLDGFEKYSHQYPLYSLQDAFSREELDAFDARVRKEVAHPTYICELKIDGLSISLTYEKGILVAGVTRGDGSIGENITENLKRVKDIPLTLPEELDITVRGECYMPRASFDQVNQVRQENGEPEFANPRNAAAGTLRQLDTAVVAKRNLATFLYQEASPSTRDSQEKGLKYLEQLGFVVNPKRILAENIDEIWNFIQEVGQERENLPYDIDGVVIKVNDLASQEELGFTVKAPKWAVAYKFPAEEKEAQLLSVDWTVGRTGVVTPTANLTPVQLAGTTVSRATLHNVDYIAEKDIRKDDTVIVYKAGDIIPAVLRVVESKRVSEEKLDIPTNCPSCNSDLLHFEDEVALRCINPRCPAQIMEGLIHFASRDAMNITGLGPSIVEKLFAANLVKDVADIYRLQEEDFLLLEGVKEKSAAKLYQAIQASKENSAEKLLFGLGIRHVGSKVSQLLLQYFHSIENLSQADSEEVASIESLGGVIAKSLQTYFATEGSEILLRELKETGVNLDYKGQTVVADAALSGLTVVLTGKLERLKRSEAKSKLESLGAKVTGSISKKTDLVVVGADAGSKLQKAQELGIQVRDEAWLESL</sequence>
<gene>
    <name evidence="1" type="primary">ligA</name>
    <name type="ordered locus">SPN23F10380</name>
</gene>
<comment type="function">
    <text evidence="1">DNA ligase that catalyzes the formation of phosphodiester linkages between 5'-phosphoryl and 3'-hydroxyl groups in double-stranded DNA using NAD as a coenzyme and as the energy source for the reaction. It is essential for DNA replication and repair of damaged DNA.</text>
</comment>
<comment type="catalytic activity">
    <reaction evidence="1">
        <text>NAD(+) + (deoxyribonucleotide)n-3'-hydroxyl + 5'-phospho-(deoxyribonucleotide)m = (deoxyribonucleotide)n+m + AMP + beta-nicotinamide D-nucleotide.</text>
        <dbReference type="EC" id="6.5.1.2"/>
    </reaction>
</comment>
<comment type="cofactor">
    <cofactor evidence="1">
        <name>Mg(2+)</name>
        <dbReference type="ChEBI" id="CHEBI:18420"/>
    </cofactor>
    <cofactor evidence="1">
        <name>Mn(2+)</name>
        <dbReference type="ChEBI" id="CHEBI:29035"/>
    </cofactor>
</comment>
<comment type="similarity">
    <text evidence="1">Belongs to the NAD-dependent DNA ligase family. LigA subfamily.</text>
</comment>
<evidence type="ECO:0000255" key="1">
    <source>
        <dbReference type="HAMAP-Rule" id="MF_01588"/>
    </source>
</evidence>
<name>DNLJ_STRPJ</name>
<feature type="chain" id="PRO_0000380482" description="DNA ligase">
    <location>
        <begin position="1"/>
        <end position="652"/>
    </location>
</feature>
<feature type="domain" description="BRCT" evidence="1">
    <location>
        <begin position="577"/>
        <end position="652"/>
    </location>
</feature>
<feature type="active site" description="N6-AMP-lysine intermediate" evidence="1">
    <location>
        <position position="109"/>
    </location>
</feature>
<feature type="binding site" evidence="1">
    <location>
        <begin position="29"/>
        <end position="33"/>
    </location>
    <ligand>
        <name>NAD(+)</name>
        <dbReference type="ChEBI" id="CHEBI:57540"/>
    </ligand>
</feature>
<feature type="binding site" evidence="1">
    <location>
        <begin position="78"/>
        <end position="79"/>
    </location>
    <ligand>
        <name>NAD(+)</name>
        <dbReference type="ChEBI" id="CHEBI:57540"/>
    </ligand>
</feature>
<feature type="binding site" evidence="1">
    <location>
        <position position="107"/>
    </location>
    <ligand>
        <name>NAD(+)</name>
        <dbReference type="ChEBI" id="CHEBI:57540"/>
    </ligand>
</feature>
<feature type="binding site" evidence="1">
    <location>
        <position position="130"/>
    </location>
    <ligand>
        <name>NAD(+)</name>
        <dbReference type="ChEBI" id="CHEBI:57540"/>
    </ligand>
</feature>
<feature type="binding site" evidence="1">
    <location>
        <position position="164"/>
    </location>
    <ligand>
        <name>NAD(+)</name>
        <dbReference type="ChEBI" id="CHEBI:57540"/>
    </ligand>
</feature>
<feature type="binding site" evidence="1">
    <location>
        <position position="278"/>
    </location>
    <ligand>
        <name>NAD(+)</name>
        <dbReference type="ChEBI" id="CHEBI:57540"/>
    </ligand>
</feature>
<feature type="binding site" evidence="1">
    <location>
        <position position="302"/>
    </location>
    <ligand>
        <name>NAD(+)</name>
        <dbReference type="ChEBI" id="CHEBI:57540"/>
    </ligand>
</feature>
<feature type="binding site" evidence="1">
    <location>
        <position position="395"/>
    </location>
    <ligand>
        <name>Zn(2+)</name>
        <dbReference type="ChEBI" id="CHEBI:29105"/>
    </ligand>
</feature>
<feature type="binding site" evidence="1">
    <location>
        <position position="398"/>
    </location>
    <ligand>
        <name>Zn(2+)</name>
        <dbReference type="ChEBI" id="CHEBI:29105"/>
    </ligand>
</feature>
<feature type="binding site" evidence="1">
    <location>
        <position position="413"/>
    </location>
    <ligand>
        <name>Zn(2+)</name>
        <dbReference type="ChEBI" id="CHEBI:29105"/>
    </ligand>
</feature>
<feature type="binding site" evidence="1">
    <location>
        <position position="418"/>
    </location>
    <ligand>
        <name>Zn(2+)</name>
        <dbReference type="ChEBI" id="CHEBI:29105"/>
    </ligand>
</feature>
<reference key="1">
    <citation type="journal article" date="2009" name="J. Bacteriol.">
        <title>Role of conjugative elements in the evolution of the multidrug-resistant pandemic clone Streptococcus pneumoniae Spain23F ST81.</title>
        <authorList>
            <person name="Croucher N.J."/>
            <person name="Walker D."/>
            <person name="Romero P."/>
            <person name="Lennard N."/>
            <person name="Paterson G.K."/>
            <person name="Bason N.C."/>
            <person name="Mitchell A.M."/>
            <person name="Quail M.A."/>
            <person name="Andrew P.W."/>
            <person name="Parkhill J."/>
            <person name="Bentley S.D."/>
            <person name="Mitchell T.J."/>
        </authorList>
    </citation>
    <scope>NUCLEOTIDE SEQUENCE [LARGE SCALE GENOMIC DNA]</scope>
    <source>
        <strain>ATCC 700669 / Spain 23F-1</strain>
    </source>
</reference>
<keyword id="KW-0227">DNA damage</keyword>
<keyword id="KW-0234">DNA repair</keyword>
<keyword id="KW-0235">DNA replication</keyword>
<keyword id="KW-0436">Ligase</keyword>
<keyword id="KW-0460">Magnesium</keyword>
<keyword id="KW-0464">Manganese</keyword>
<keyword id="KW-0479">Metal-binding</keyword>
<keyword id="KW-0520">NAD</keyword>
<keyword id="KW-0862">Zinc</keyword>